<protein>
    <recommendedName>
        <fullName>Uncharacterized protein ycf68</fullName>
    </recommendedName>
</protein>
<dbReference type="EMBL" id="AY228468">
    <property type="protein sequence ID" value="AAO74110.1"/>
    <property type="molecule type" value="Genomic_DNA"/>
</dbReference>
<dbReference type="RefSeq" id="NP_817265.1">
    <property type="nucleotide sequence ID" value="NC_004677.2"/>
</dbReference>
<dbReference type="GO" id="GO:0009507">
    <property type="term" value="C:chloroplast"/>
    <property type="evidence" value="ECO:0007669"/>
    <property type="project" value="UniProtKB-SubCell"/>
</dbReference>
<dbReference type="InterPro" id="IPR022546">
    <property type="entry name" value="Uncharacterised_Ycf68"/>
</dbReference>
<dbReference type="Pfam" id="PF10839">
    <property type="entry name" value="DUF2647"/>
    <property type="match status" value="1"/>
</dbReference>
<proteinExistence type="inferred from homology"/>
<reference key="1">
    <citation type="submission" date="2003-02" db="EMBL/GenBank/DDBJ databases">
        <title>Complete nucleotide sequence of Pinus koraiensis.</title>
        <authorList>
            <person name="Noh E.W."/>
            <person name="Lee J.S."/>
            <person name="Choi Y.I."/>
            <person name="Han M.S."/>
            <person name="Yi Y.S."/>
            <person name="Han S.U."/>
        </authorList>
    </citation>
    <scope>NUCLEOTIDE SEQUENCE [LARGE SCALE GENOMIC DNA]</scope>
    <source>
        <strain>KangWon16</strain>
    </source>
</reference>
<geneLocation type="chloroplast"/>
<keyword id="KW-0150">Chloroplast</keyword>
<keyword id="KW-0934">Plastid</keyword>
<sequence length="75" mass="8057">MAYSSCLFEPGFGTELILRRIDGAIQVRSNADPTFYSFVDLGGPGGPVVIHHGSSLLENPYIPYQCMDGYLSGTG</sequence>
<evidence type="ECO:0000305" key="1"/>
<gene>
    <name type="primary">ycf68</name>
</gene>
<comment type="subcellular location">
    <subcellularLocation>
        <location>Plastid</location>
        <location>Chloroplast</location>
    </subcellularLocation>
</comment>
<comment type="similarity">
    <text evidence="1">Belongs to the ycf68 family.</text>
</comment>
<accession>Q85WV9</accession>
<organism>
    <name type="scientific">Pinus koraiensis</name>
    <name type="common">Korean pine</name>
    <dbReference type="NCBI Taxonomy" id="88728"/>
    <lineage>
        <taxon>Eukaryota</taxon>
        <taxon>Viridiplantae</taxon>
        <taxon>Streptophyta</taxon>
        <taxon>Embryophyta</taxon>
        <taxon>Tracheophyta</taxon>
        <taxon>Spermatophyta</taxon>
        <taxon>Pinopsida</taxon>
        <taxon>Pinidae</taxon>
        <taxon>Conifers I</taxon>
        <taxon>Pinales</taxon>
        <taxon>Pinaceae</taxon>
        <taxon>Pinus</taxon>
        <taxon>Pinus subgen. Strobus</taxon>
    </lineage>
</organism>
<feature type="chain" id="PRO_0000277440" description="Uncharacterized protein ycf68">
    <location>
        <begin position="1"/>
        <end position="75"/>
    </location>
</feature>
<name>YCF68_PINKO</name>